<dbReference type="EMBL" id="X75609">
    <property type="protein sequence ID" value="CAA53281.1"/>
    <property type="molecule type" value="mRNA"/>
</dbReference>
<dbReference type="SMR" id="Q43691"/>
<dbReference type="STRING" id="4565.Q43691"/>
<dbReference type="Allergome" id="11042">
    <property type="allergen name" value="Tri a CMX"/>
</dbReference>
<dbReference type="Proteomes" id="UP000019116">
    <property type="component" value="Unplaced"/>
</dbReference>
<dbReference type="ExpressionAtlas" id="Q43691">
    <property type="expression patterns" value="baseline"/>
</dbReference>
<dbReference type="GO" id="GO:0005576">
    <property type="term" value="C:extracellular region"/>
    <property type="evidence" value="ECO:0007669"/>
    <property type="project" value="UniProtKB-SubCell"/>
</dbReference>
<dbReference type="GO" id="GO:0004867">
    <property type="term" value="F:serine-type endopeptidase inhibitor activity"/>
    <property type="evidence" value="ECO:0007669"/>
    <property type="project" value="UniProtKB-KW"/>
</dbReference>
<dbReference type="CDD" id="cd00261">
    <property type="entry name" value="AAI_SS"/>
    <property type="match status" value="1"/>
</dbReference>
<dbReference type="Gene3D" id="1.10.110.10">
    <property type="entry name" value="Plant lipid-transfer and hydrophobic proteins"/>
    <property type="match status" value="1"/>
</dbReference>
<dbReference type="InterPro" id="IPR036312">
    <property type="entry name" value="Bifun_inhib/LTP/seed_sf"/>
</dbReference>
<dbReference type="InterPro" id="IPR016140">
    <property type="entry name" value="Bifunc_inhib/LTP/seed_store"/>
</dbReference>
<dbReference type="PANTHER" id="PTHR34481">
    <property type="entry name" value="TRYPSIN/FACTOR XIIA INHIBITOR-RELATED"/>
    <property type="match status" value="1"/>
</dbReference>
<dbReference type="PANTHER" id="PTHR34481:SF15">
    <property type="entry name" value="TRYPSIN_ALPHA-AMYLASE INHIBITOR CMX1_CMX3"/>
    <property type="match status" value="1"/>
</dbReference>
<dbReference type="Pfam" id="PF00234">
    <property type="entry name" value="Tryp_alpha_amyl"/>
    <property type="match status" value="1"/>
</dbReference>
<dbReference type="SUPFAM" id="SSF47699">
    <property type="entry name" value="Bifunctional inhibitor/lipid-transfer protein/seed storage 2S albumin"/>
    <property type="match status" value="1"/>
</dbReference>
<proteinExistence type="evidence at transcript level"/>
<keyword id="KW-0646">Protease inhibitor</keyword>
<keyword id="KW-1185">Reference proteome</keyword>
<keyword id="KW-0964">Secreted</keyword>
<keyword id="KW-0722">Serine protease inhibitor</keyword>
<keyword id="KW-0732">Signal</keyword>
<protein>
    <recommendedName>
        <fullName>Trypsin/alpha-amylase inhibitor CMX2</fullName>
    </recommendedName>
    <alternativeName>
        <fullName>ITRL-2</fullName>
    </alternativeName>
</protein>
<accession>Q43691</accession>
<evidence type="ECO:0000255" key="1"/>
<evidence type="ECO:0000305" key="2"/>
<name>IACX2_WHEAT</name>
<reference key="1">
    <citation type="journal article" date="1994" name="Plant Mol. Biol.">
        <title>Sharp divergence between wheat and barley at loci encoding novel members of the trypsin/alpha-amylase inhibitors family.</title>
        <authorList>
            <person name="Sanchez de la Hoz P."/>
            <person name="Castagnaro A."/>
            <person name="Carbonero P."/>
        </authorList>
    </citation>
    <scope>NUCLEOTIDE SEQUENCE [MRNA]</scope>
    <source>
        <strain>cv. Chinese Spring</strain>
        <tissue>Endosperm</tissue>
    </source>
</reference>
<feature type="signal peptide" evidence="1">
    <location>
        <begin position="1"/>
        <end position="24"/>
    </location>
</feature>
<feature type="chain" id="PRO_0000014349" description="Trypsin/alpha-amylase inhibitor CMX2">
    <location>
        <begin position="25"/>
        <end position="121"/>
    </location>
</feature>
<sequence>MAFKHQLILSTAILLAVLAAASASFREQCVPGREITYESLNARREYAVRQTCGYYLSAERQKRRCCDELSKVPELCWCEVLRILMDRRVTKEGVVKDSLLQDMSRCKKLTREFIAGIVGRE</sequence>
<comment type="subcellular location">
    <subcellularLocation>
        <location evidence="2">Secreted</location>
    </subcellularLocation>
</comment>
<comment type="similarity">
    <text evidence="2">Belongs to the protease inhibitor I6 (cereal trypsin/alpha-amylase inhibitor) family.</text>
</comment>
<organism>
    <name type="scientific">Triticum aestivum</name>
    <name type="common">Wheat</name>
    <dbReference type="NCBI Taxonomy" id="4565"/>
    <lineage>
        <taxon>Eukaryota</taxon>
        <taxon>Viridiplantae</taxon>
        <taxon>Streptophyta</taxon>
        <taxon>Embryophyta</taxon>
        <taxon>Tracheophyta</taxon>
        <taxon>Spermatophyta</taxon>
        <taxon>Magnoliopsida</taxon>
        <taxon>Liliopsida</taxon>
        <taxon>Poales</taxon>
        <taxon>Poaceae</taxon>
        <taxon>BOP clade</taxon>
        <taxon>Pooideae</taxon>
        <taxon>Triticodae</taxon>
        <taxon>Triticeae</taxon>
        <taxon>Triticinae</taxon>
        <taxon>Triticum</taxon>
    </lineage>
</organism>